<feature type="chain" id="PRO_1000144787" description="Hydroxyacylglutathione hydrolase">
    <location>
        <begin position="1"/>
        <end position="259"/>
    </location>
</feature>
<feature type="binding site" evidence="1">
    <location>
        <position position="56"/>
    </location>
    <ligand>
        <name>Zn(2+)</name>
        <dbReference type="ChEBI" id="CHEBI:29105"/>
        <label>1</label>
    </ligand>
</feature>
<feature type="binding site" evidence="1">
    <location>
        <position position="58"/>
    </location>
    <ligand>
        <name>Zn(2+)</name>
        <dbReference type="ChEBI" id="CHEBI:29105"/>
        <label>1</label>
    </ligand>
</feature>
<feature type="binding site" evidence="1">
    <location>
        <position position="60"/>
    </location>
    <ligand>
        <name>Zn(2+)</name>
        <dbReference type="ChEBI" id="CHEBI:29105"/>
        <label>2</label>
    </ligand>
</feature>
<feature type="binding site" evidence="1">
    <location>
        <position position="61"/>
    </location>
    <ligand>
        <name>Zn(2+)</name>
        <dbReference type="ChEBI" id="CHEBI:29105"/>
        <label>2</label>
    </ligand>
</feature>
<feature type="binding site" evidence="1">
    <location>
        <position position="112"/>
    </location>
    <ligand>
        <name>Zn(2+)</name>
        <dbReference type="ChEBI" id="CHEBI:29105"/>
        <label>1</label>
    </ligand>
</feature>
<feature type="binding site" evidence="1">
    <location>
        <position position="133"/>
    </location>
    <ligand>
        <name>Zn(2+)</name>
        <dbReference type="ChEBI" id="CHEBI:29105"/>
        <label>1</label>
    </ligand>
</feature>
<feature type="binding site" evidence="1">
    <location>
        <position position="133"/>
    </location>
    <ligand>
        <name>Zn(2+)</name>
        <dbReference type="ChEBI" id="CHEBI:29105"/>
        <label>2</label>
    </ligand>
</feature>
<feature type="binding site" evidence="1">
    <location>
        <position position="171"/>
    </location>
    <ligand>
        <name>Zn(2+)</name>
        <dbReference type="ChEBI" id="CHEBI:29105"/>
        <label>2</label>
    </ligand>
</feature>
<reference key="1">
    <citation type="journal article" date="2002" name="Environ. Microbiol.">
        <title>Complete genome sequence and comparative analysis of the metabolically versatile Pseudomonas putida KT2440.</title>
        <authorList>
            <person name="Nelson K.E."/>
            <person name="Weinel C."/>
            <person name="Paulsen I.T."/>
            <person name="Dodson R.J."/>
            <person name="Hilbert H."/>
            <person name="Martins dos Santos V.A.P."/>
            <person name="Fouts D.E."/>
            <person name="Gill S.R."/>
            <person name="Pop M."/>
            <person name="Holmes M."/>
            <person name="Brinkac L.M."/>
            <person name="Beanan M.J."/>
            <person name="DeBoy R.T."/>
            <person name="Daugherty S.C."/>
            <person name="Kolonay J.F."/>
            <person name="Madupu R."/>
            <person name="Nelson W.C."/>
            <person name="White O."/>
            <person name="Peterson J.D."/>
            <person name="Khouri H.M."/>
            <person name="Hance I."/>
            <person name="Chris Lee P."/>
            <person name="Holtzapple E.K."/>
            <person name="Scanlan D."/>
            <person name="Tran K."/>
            <person name="Moazzez A."/>
            <person name="Utterback T.R."/>
            <person name="Rizzo M."/>
            <person name="Lee K."/>
            <person name="Kosack D."/>
            <person name="Moestl D."/>
            <person name="Wedler H."/>
            <person name="Lauber J."/>
            <person name="Stjepandic D."/>
            <person name="Hoheisel J."/>
            <person name="Straetz M."/>
            <person name="Heim S."/>
            <person name="Kiewitz C."/>
            <person name="Eisen J.A."/>
            <person name="Timmis K.N."/>
            <person name="Duesterhoeft A."/>
            <person name="Tuemmler B."/>
            <person name="Fraser C.M."/>
        </authorList>
    </citation>
    <scope>NUCLEOTIDE SEQUENCE [LARGE SCALE GENOMIC DNA]</scope>
    <source>
        <strain>ATCC 47054 / DSM 6125 / CFBP 8728 / NCIMB 11950 / KT2440</strain>
    </source>
</reference>
<accession>Q88FF3</accession>
<protein>
    <recommendedName>
        <fullName evidence="1">Hydroxyacylglutathione hydrolase</fullName>
        <ecNumber evidence="1">3.1.2.6</ecNumber>
    </recommendedName>
    <alternativeName>
        <fullName evidence="1">Glyoxalase II</fullName>
        <shortName evidence="1">Glx II</shortName>
    </alternativeName>
</protein>
<name>GLO2_PSEPK</name>
<gene>
    <name evidence="1" type="primary">gloB</name>
    <name type="ordered locus">PP_4144</name>
    <name type="ORF">PP4144</name>
</gene>
<organism>
    <name type="scientific">Pseudomonas putida (strain ATCC 47054 / DSM 6125 / CFBP 8728 / NCIMB 11950 / KT2440)</name>
    <dbReference type="NCBI Taxonomy" id="160488"/>
    <lineage>
        <taxon>Bacteria</taxon>
        <taxon>Pseudomonadati</taxon>
        <taxon>Pseudomonadota</taxon>
        <taxon>Gammaproteobacteria</taxon>
        <taxon>Pseudomonadales</taxon>
        <taxon>Pseudomonadaceae</taxon>
        <taxon>Pseudomonas</taxon>
    </lineage>
</organism>
<keyword id="KW-0378">Hydrolase</keyword>
<keyword id="KW-0479">Metal-binding</keyword>
<keyword id="KW-1185">Reference proteome</keyword>
<keyword id="KW-0862">Zinc</keyword>
<comment type="function">
    <text evidence="1">Thiolesterase that catalyzes the hydrolysis of S-D-lactoyl-glutathione to form glutathione and D-lactic acid.</text>
</comment>
<comment type="catalytic activity">
    <reaction evidence="1">
        <text>an S-(2-hydroxyacyl)glutathione + H2O = a 2-hydroxy carboxylate + glutathione + H(+)</text>
        <dbReference type="Rhea" id="RHEA:21864"/>
        <dbReference type="ChEBI" id="CHEBI:15377"/>
        <dbReference type="ChEBI" id="CHEBI:15378"/>
        <dbReference type="ChEBI" id="CHEBI:57925"/>
        <dbReference type="ChEBI" id="CHEBI:58896"/>
        <dbReference type="ChEBI" id="CHEBI:71261"/>
        <dbReference type="EC" id="3.1.2.6"/>
    </reaction>
</comment>
<comment type="cofactor">
    <cofactor evidence="1">
        <name>Zn(2+)</name>
        <dbReference type="ChEBI" id="CHEBI:29105"/>
    </cofactor>
    <text evidence="1">Binds 2 Zn(2+) ions per subunit.</text>
</comment>
<comment type="pathway">
    <text evidence="1">Secondary metabolite metabolism; methylglyoxal degradation; (R)-lactate from methylglyoxal: step 2/2.</text>
</comment>
<comment type="subunit">
    <text evidence="1">Monomer.</text>
</comment>
<comment type="similarity">
    <text evidence="1">Belongs to the metallo-beta-lactamase superfamily. Glyoxalase II family.</text>
</comment>
<sequence length="259" mass="28768">MIQIEALPAFSDNYIWLLQDTAKRRCAVVDPGDAGPVERWLAANPEWVLSDILVTHHHNDHVGGVERLRQLTGARVCGPANERIPGRDLALDEGDRVDVLGVTFQVMAVPGHTLGHIAFFSDQPATPILFSGDTLFAAGCGRMFEGTPEQMQPALARLAALPEQTQVYCAHEYTLSNLRFAKAVEPTNPHVQQRFEDVTRLRAENRISLPSTIGLERLTNPFLRTAETLVKQKADEWKGHSNNSHVAVFAALRSWKDTF</sequence>
<dbReference type="EC" id="3.1.2.6" evidence="1"/>
<dbReference type="EMBL" id="AE015451">
    <property type="protein sequence ID" value="AAN69726.1"/>
    <property type="molecule type" value="Genomic_DNA"/>
</dbReference>
<dbReference type="RefSeq" id="NP_746262.1">
    <property type="nucleotide sequence ID" value="NC_002947.4"/>
</dbReference>
<dbReference type="RefSeq" id="WP_010954914.1">
    <property type="nucleotide sequence ID" value="NZ_CP169744.1"/>
</dbReference>
<dbReference type="SMR" id="Q88FF3"/>
<dbReference type="STRING" id="160488.PP_4144"/>
<dbReference type="PaxDb" id="160488-PP_4144"/>
<dbReference type="GeneID" id="83679166"/>
<dbReference type="KEGG" id="ppu:PP_4144"/>
<dbReference type="PATRIC" id="fig|160488.4.peg.4404"/>
<dbReference type="eggNOG" id="COG0491">
    <property type="taxonomic scope" value="Bacteria"/>
</dbReference>
<dbReference type="HOGENOM" id="CLU_030571_4_1_6"/>
<dbReference type="OrthoDB" id="9802248at2"/>
<dbReference type="PhylomeDB" id="Q88FF3"/>
<dbReference type="BioCyc" id="PPUT160488:G1G01-4411-MONOMER"/>
<dbReference type="UniPathway" id="UPA00619">
    <property type="reaction ID" value="UER00676"/>
</dbReference>
<dbReference type="Proteomes" id="UP000000556">
    <property type="component" value="Chromosome"/>
</dbReference>
<dbReference type="GO" id="GO:0004416">
    <property type="term" value="F:hydroxyacylglutathione hydrolase activity"/>
    <property type="evidence" value="ECO:0007669"/>
    <property type="project" value="UniProtKB-UniRule"/>
</dbReference>
<dbReference type="GO" id="GO:0046872">
    <property type="term" value="F:metal ion binding"/>
    <property type="evidence" value="ECO:0007669"/>
    <property type="project" value="UniProtKB-KW"/>
</dbReference>
<dbReference type="GO" id="GO:0019243">
    <property type="term" value="P:methylglyoxal catabolic process to D-lactate via S-lactoyl-glutathione"/>
    <property type="evidence" value="ECO:0007669"/>
    <property type="project" value="InterPro"/>
</dbReference>
<dbReference type="CDD" id="cd07723">
    <property type="entry name" value="hydroxyacylglutathione_hydrolase_MBL-fold"/>
    <property type="match status" value="1"/>
</dbReference>
<dbReference type="Gene3D" id="3.60.15.10">
    <property type="entry name" value="Ribonuclease Z/Hydroxyacylglutathione hydrolase-like"/>
    <property type="match status" value="1"/>
</dbReference>
<dbReference type="HAMAP" id="MF_01374">
    <property type="entry name" value="Glyoxalase_2"/>
    <property type="match status" value="1"/>
</dbReference>
<dbReference type="InterPro" id="IPR035680">
    <property type="entry name" value="Clx_II_MBL"/>
</dbReference>
<dbReference type="InterPro" id="IPR050110">
    <property type="entry name" value="Glyoxalase_II_hydrolase"/>
</dbReference>
<dbReference type="InterPro" id="IPR032282">
    <property type="entry name" value="HAGH_C"/>
</dbReference>
<dbReference type="InterPro" id="IPR017782">
    <property type="entry name" value="Hydroxyacylglutathione_Hdrlase"/>
</dbReference>
<dbReference type="InterPro" id="IPR001279">
    <property type="entry name" value="Metallo-B-lactamas"/>
</dbReference>
<dbReference type="InterPro" id="IPR036866">
    <property type="entry name" value="RibonucZ/Hydroxyglut_hydro"/>
</dbReference>
<dbReference type="NCBIfam" id="TIGR03413">
    <property type="entry name" value="GSH_gloB"/>
    <property type="match status" value="1"/>
</dbReference>
<dbReference type="PANTHER" id="PTHR43705">
    <property type="entry name" value="HYDROXYACYLGLUTATHIONE HYDROLASE"/>
    <property type="match status" value="1"/>
</dbReference>
<dbReference type="PANTHER" id="PTHR43705:SF1">
    <property type="entry name" value="HYDROXYACYLGLUTATHIONE HYDROLASE GLOB"/>
    <property type="match status" value="1"/>
</dbReference>
<dbReference type="Pfam" id="PF16123">
    <property type="entry name" value="HAGH_C"/>
    <property type="match status" value="1"/>
</dbReference>
<dbReference type="Pfam" id="PF00753">
    <property type="entry name" value="Lactamase_B"/>
    <property type="match status" value="1"/>
</dbReference>
<dbReference type="PIRSF" id="PIRSF005457">
    <property type="entry name" value="Glx"/>
    <property type="match status" value="1"/>
</dbReference>
<dbReference type="SMART" id="SM00849">
    <property type="entry name" value="Lactamase_B"/>
    <property type="match status" value="1"/>
</dbReference>
<dbReference type="SUPFAM" id="SSF56281">
    <property type="entry name" value="Metallo-hydrolase/oxidoreductase"/>
    <property type="match status" value="1"/>
</dbReference>
<proteinExistence type="inferred from homology"/>
<evidence type="ECO:0000255" key="1">
    <source>
        <dbReference type="HAMAP-Rule" id="MF_01374"/>
    </source>
</evidence>